<proteinExistence type="evidence at protein level"/>
<evidence type="ECO:0000255" key="1"/>
<evidence type="ECO:0000269" key="2">
    <source>
    </source>
</evidence>
<evidence type="ECO:0000305" key="3"/>
<reference key="1">
    <citation type="journal article" date="1991" name="J. Biol. Chem.">
        <title>Bombinin-like peptides with antimicrobial activity from skin secretions of the Asian toad, Bombina orientalis.</title>
        <authorList>
            <person name="Gibson B.W."/>
            <person name="Tang D."/>
            <person name="Mandrell R."/>
            <person name="Kelly M."/>
            <person name="Spindel E.R."/>
        </authorList>
    </citation>
    <scope>NUCLEOTIDE SEQUENCE [GENOMIC DNA]</scope>
    <scope>PROTEIN SEQUENCE OF 44-68 AND 105-129</scope>
    <scope>AMIDATION AT PHE-68 AND PHE-129</scope>
    <source>
        <tissue>Skin</tissue>
        <tissue>Skin secretion</tissue>
    </source>
</reference>
<reference key="2">
    <citation type="journal article" date="1998" name="FEBS Lett.">
        <title>Molecular cloning of a bombinin gene from Bombina orientalis: detection of NF-kappaB and NF-IL6 binding sites in its promoter.</title>
        <authorList>
            <person name="Miele R."/>
            <person name="Ponti D."/>
            <person name="Boman H.G."/>
            <person name="Barra D."/>
            <person name="Simmaco M."/>
        </authorList>
    </citation>
    <scope>NUCLEOTIDE SEQUENCE [GENOMIC DNA]</scope>
    <source>
        <tissue>Liver</tissue>
    </source>
</reference>
<comment type="function">
    <text>Has antimicrobial activity, but no hemolytic activity. Preference on killing Gram-negative non-enteric bacteria.</text>
</comment>
<comment type="subcellular location">
    <subcellularLocation>
        <location>Secreted</location>
    </subcellularLocation>
</comment>
<comment type="tissue specificity">
    <text>Expressed by the skin glands.</text>
</comment>
<comment type="similarity">
    <text evidence="3">Belongs to the bombinin family.</text>
</comment>
<name>BMNL3_BOMOR</name>
<accession>P29004</accession>
<sequence>MNFKYIVAVSILIASAYARSEENDIQSLSQRDVLEEESLREIRGIGAAILSAGKSALKGLAKGLAEHFGKRTAEDHEVMKRLEAAIHSLSQRDVLEEESLREIRGIGAAILSAGKSALKGLAKGLAEHFGKRTAEEHEMMKRLEAVMRDLDSLDYPEEASEMETRSFNQEEIANLYTKKEKRILGPILGLVSNALGGLLG</sequence>
<protein>
    <recommendedName>
        <fullName>Bombinin-like peptides 3</fullName>
    </recommendedName>
    <component>
        <recommendedName>
            <fullName>Acidic peptide 1</fullName>
        </recommendedName>
    </component>
    <component>
        <recommendedName>
            <fullName>Bombinin-like peptide 3</fullName>
            <shortName>BLP-3</shortName>
        </recommendedName>
    </component>
    <component>
        <recommendedName>
            <fullName>Octapeptide 1</fullName>
        </recommendedName>
    </component>
    <component>
        <recommendedName>
            <fullName>Acidic peptide 2</fullName>
        </recommendedName>
    </component>
    <component>
        <recommendedName>
            <fullName>Octapeptide 2</fullName>
        </recommendedName>
    </component>
    <component>
        <recommendedName>
            <fullName>Acidic peptide 3</fullName>
        </recommendedName>
    </component>
    <component>
        <recommendedName>
            <fullName>GH-1 peptide</fullName>
        </recommendedName>
    </component>
</protein>
<keyword id="KW-0027">Amidation</keyword>
<keyword id="KW-0878">Amphibian defense peptide</keyword>
<keyword id="KW-0044">Antibiotic</keyword>
<keyword id="KW-0929">Antimicrobial</keyword>
<keyword id="KW-0165">Cleavage on pair of basic residues</keyword>
<keyword id="KW-0903">Direct protein sequencing</keyword>
<keyword id="KW-0677">Repeat</keyword>
<keyword id="KW-0964">Secreted</keyword>
<keyword id="KW-0732">Signal</keyword>
<organism>
    <name type="scientific">Bombina orientalis</name>
    <name type="common">Oriental fire-bellied toad</name>
    <dbReference type="NCBI Taxonomy" id="8346"/>
    <lineage>
        <taxon>Eukaryota</taxon>
        <taxon>Metazoa</taxon>
        <taxon>Chordata</taxon>
        <taxon>Craniata</taxon>
        <taxon>Vertebrata</taxon>
        <taxon>Euteleostomi</taxon>
        <taxon>Amphibia</taxon>
        <taxon>Batrachia</taxon>
        <taxon>Anura</taxon>
        <taxon>Bombinatoridae</taxon>
        <taxon>Bombina</taxon>
    </lineage>
</organism>
<dbReference type="EMBL" id="M76484">
    <property type="protein sequence ID" value="AAA73095.1"/>
    <property type="molecule type" value="Genomic_DNA"/>
</dbReference>
<dbReference type="EMBL" id="AJ007445">
    <property type="protein sequence ID" value="CAA07511.1"/>
    <property type="molecule type" value="Genomic_DNA"/>
</dbReference>
<dbReference type="PIR" id="C41575">
    <property type="entry name" value="C41575"/>
</dbReference>
<dbReference type="GO" id="GO:0005576">
    <property type="term" value="C:extracellular region"/>
    <property type="evidence" value="ECO:0007669"/>
    <property type="project" value="UniProtKB-SubCell"/>
</dbReference>
<dbReference type="GO" id="GO:0042742">
    <property type="term" value="P:defense response to bacterium"/>
    <property type="evidence" value="ECO:0007669"/>
    <property type="project" value="UniProtKB-KW"/>
</dbReference>
<dbReference type="InterPro" id="IPR007962">
    <property type="entry name" value="Bombinin"/>
</dbReference>
<dbReference type="Pfam" id="PF05298">
    <property type="entry name" value="Bombinin"/>
    <property type="match status" value="2"/>
</dbReference>
<feature type="signal peptide" description="Or 18">
    <location>
        <begin position="1"/>
        <end position="16"/>
    </location>
</feature>
<feature type="peptide" id="PRO_0000003059" description="Acidic peptide 1" evidence="1">
    <location>
        <begin position="17"/>
        <end position="43"/>
    </location>
</feature>
<feature type="peptide" id="PRO_0000003060" description="Bombinin-like peptide 3">
    <location>
        <begin position="44"/>
        <end position="68"/>
    </location>
</feature>
<feature type="peptide" id="PRO_0000003061" description="Octapeptide 1" evidence="1">
    <location>
        <begin position="72"/>
        <end position="79"/>
    </location>
</feature>
<feature type="peptide" id="PRO_0000003062" description="Acidic peptide 2" evidence="1">
    <location>
        <begin position="82"/>
        <end position="104"/>
    </location>
</feature>
<feature type="peptide" id="PRO_0000003063" description="Bombinin-like peptide 3">
    <location>
        <begin position="105"/>
        <end position="129"/>
    </location>
</feature>
<feature type="peptide" id="PRO_0000003064" description="Octapeptide 2" evidence="1">
    <location>
        <begin position="133"/>
        <end position="140"/>
    </location>
</feature>
<feature type="peptide" id="PRO_0000003065" description="Acidic peptide 3" evidence="1">
    <location>
        <begin position="143"/>
        <end position="177"/>
    </location>
</feature>
<feature type="peptide" id="PRO_0000003066" description="GH-1 peptide" evidence="1">
    <location>
        <begin position="183"/>
        <end position="200"/>
    </location>
</feature>
<feature type="modified residue" description="Phenylalanine amide" evidence="2">
    <location>
        <position position="68"/>
    </location>
</feature>
<feature type="modified residue" description="Phenylalanine amide" evidence="2">
    <location>
        <position position="129"/>
    </location>
</feature>
<feature type="sequence conflict" description="In Ref. 2; CAA07511." evidence="3" ref="2">
    <original>I</original>
    <variation>F</variation>
    <location>
        <position position="11"/>
    </location>
</feature>
<feature type="sequence conflict" description="In Ref. 2; CAA07511." evidence="3" ref="2">
    <original>A</original>
    <variation>V</variation>
    <location>
        <position position="84"/>
    </location>
</feature>
<feature type="sequence conflict" description="In Ref. 2; CAA07511." evidence="3" ref="2">
    <original>H</original>
    <variation>Q</variation>
    <location>
        <position position="87"/>
    </location>
</feature>
<feature type="sequence conflict" description="In Ref. 2; CAA07511." evidence="3" ref="2">
    <original>M</original>
    <variation>V</variation>
    <location>
        <position position="139"/>
    </location>
</feature>
<feature type="sequence conflict" description="In Ref. 2; CAA07511." evidence="3" ref="2">
    <original>M</original>
    <variation>R</variation>
    <location>
        <position position="162"/>
    </location>
</feature>
<feature type="sequence conflict" description="In Ref. 2; CAA07511." evidence="3" ref="2">
    <original>S</original>
    <variation>D</variation>
    <location>
        <position position="166"/>
    </location>
</feature>
<feature type="sequence conflict" description="In Ref. 2; CAA07511." evidence="3" ref="2">
    <location>
        <begin position="172"/>
        <end position="178"/>
    </location>
</feature>
<feature type="sequence conflict" description="In Ref. 2; CAA07511." evidence="3" ref="2">
    <original>L</original>
    <variation>I</variation>
    <location>
        <position position="184"/>
    </location>
</feature>
<feature type="sequence conflict" description="In Ref. 2; CAA07511." evidence="3" ref="2">
    <original>I</original>
    <variation>V</variation>
    <location>
        <position position="187"/>
    </location>
</feature>
<feature type="sequence conflict" description="In Ref. 2; CAA07511." evidence="3" ref="2">
    <original>SNALGGLLG</original>
    <variation>GKPLESLLE</variation>
    <location>
        <begin position="192"/>
        <end position="200"/>
    </location>
</feature>